<gene>
    <name type="ordered locus">MmarC5_0068</name>
</gene>
<dbReference type="EMBL" id="CP000609">
    <property type="protein sequence ID" value="ABO34385.1"/>
    <property type="molecule type" value="Genomic_DNA"/>
</dbReference>
<dbReference type="RefSeq" id="WP_011171453.1">
    <property type="nucleotide sequence ID" value="NC_009135.1"/>
</dbReference>
<dbReference type="STRING" id="402880.MmarC5_0068"/>
<dbReference type="KEGG" id="mmq:MmarC5_0068"/>
<dbReference type="eggNOG" id="arCOG02119">
    <property type="taxonomic scope" value="Archaea"/>
</dbReference>
<dbReference type="HOGENOM" id="CLU_138334_0_0_2"/>
<dbReference type="OrthoDB" id="63517at2157"/>
<dbReference type="Proteomes" id="UP000000253">
    <property type="component" value="Chromosome"/>
</dbReference>
<dbReference type="HAMAP" id="MF_01223">
    <property type="entry name" value="UPF0212"/>
    <property type="match status" value="1"/>
</dbReference>
<dbReference type="InterPro" id="IPR007564">
    <property type="entry name" value="UPF0212"/>
</dbReference>
<dbReference type="NCBIfam" id="NF003035">
    <property type="entry name" value="PRK03922.1"/>
    <property type="match status" value="1"/>
</dbReference>
<dbReference type="PANTHER" id="PTHR42199">
    <property type="entry name" value="UPF0212 PROTEIN MJ0068"/>
    <property type="match status" value="1"/>
</dbReference>
<dbReference type="PANTHER" id="PTHR42199:SF1">
    <property type="entry name" value="UPF0212 PROTEIN TK1194"/>
    <property type="match status" value="1"/>
</dbReference>
<dbReference type="Pfam" id="PF04475">
    <property type="entry name" value="DUF555"/>
    <property type="match status" value="1"/>
</dbReference>
<dbReference type="PIRSF" id="PIRSF016934">
    <property type="entry name" value="UCP016934"/>
    <property type="match status" value="1"/>
</dbReference>
<name>Y068_METM5</name>
<reference key="1">
    <citation type="submission" date="2007-03" db="EMBL/GenBank/DDBJ databases">
        <title>Complete sequence of chromosome of Methanococcus maripaludis C5.</title>
        <authorList>
            <consortium name="US DOE Joint Genome Institute"/>
            <person name="Copeland A."/>
            <person name="Lucas S."/>
            <person name="Lapidus A."/>
            <person name="Barry K."/>
            <person name="Glavina del Rio T."/>
            <person name="Dalin E."/>
            <person name="Tice H."/>
            <person name="Pitluck S."/>
            <person name="Chertkov O."/>
            <person name="Brettin T."/>
            <person name="Bruce D."/>
            <person name="Han C."/>
            <person name="Detter J.C."/>
            <person name="Schmutz J."/>
            <person name="Larimer F."/>
            <person name="Land M."/>
            <person name="Hauser L."/>
            <person name="Kyrpides N."/>
            <person name="Mikhailova N."/>
            <person name="Sieprawska-Lupa M."/>
            <person name="Whitman W.B."/>
            <person name="Richardson P."/>
        </authorList>
    </citation>
    <scope>NUCLEOTIDE SEQUENCE [LARGE SCALE GENOMIC DNA]</scope>
    <source>
        <strain>C5 / ATCC BAA-1333</strain>
    </source>
</reference>
<organism>
    <name type="scientific">Methanococcus maripaludis (strain C5 / ATCC BAA-1333)</name>
    <dbReference type="NCBI Taxonomy" id="402880"/>
    <lineage>
        <taxon>Archaea</taxon>
        <taxon>Methanobacteriati</taxon>
        <taxon>Methanobacteriota</taxon>
        <taxon>Methanomada group</taxon>
        <taxon>Methanococci</taxon>
        <taxon>Methanococcales</taxon>
        <taxon>Methanococcaceae</taxon>
        <taxon>Methanococcus</taxon>
    </lineage>
</organism>
<comment type="similarity">
    <text evidence="1">Belongs to the UPF0212 family.</text>
</comment>
<protein>
    <recommendedName>
        <fullName evidence="1">UPF0212 protein MmarC5_0068</fullName>
    </recommendedName>
</protein>
<feature type="chain" id="PRO_1000066791" description="UPF0212 protein MmarC5_0068">
    <location>
        <begin position="1"/>
        <end position="113"/>
    </location>
</feature>
<evidence type="ECO:0000255" key="1">
    <source>
        <dbReference type="HAMAP-Rule" id="MF_01223"/>
    </source>
</evidence>
<proteinExistence type="inferred from homology"/>
<sequence length="113" mass="12049">MGNYHVTLQASYIAKNVEDVEDAIGVAISQIGKLLNKGSLDYVDIDVGLTICPKCGEPIDCVLVVAKTAIVGILLSMKVFNAESPEHAVRIAKSSIGRALKDIPLEDVDVVEI</sequence>
<accession>A4FW14</accession>